<feature type="chain" id="PRO_0000386891" description="Ribosomal RNA small subunit methyltransferase H">
    <location>
        <begin position="1"/>
        <end position="312"/>
    </location>
</feature>
<feature type="binding site" evidence="1">
    <location>
        <begin position="32"/>
        <end position="34"/>
    </location>
    <ligand>
        <name>S-adenosyl-L-methionine</name>
        <dbReference type="ChEBI" id="CHEBI:59789"/>
    </ligand>
</feature>
<feature type="binding site" evidence="1">
    <location>
        <position position="51"/>
    </location>
    <ligand>
        <name>S-adenosyl-L-methionine</name>
        <dbReference type="ChEBI" id="CHEBI:59789"/>
    </ligand>
</feature>
<feature type="binding site" evidence="1">
    <location>
        <position position="78"/>
    </location>
    <ligand>
        <name>S-adenosyl-L-methionine</name>
        <dbReference type="ChEBI" id="CHEBI:59789"/>
    </ligand>
</feature>
<feature type="binding site" evidence="1">
    <location>
        <position position="99"/>
    </location>
    <ligand>
        <name>S-adenosyl-L-methionine</name>
        <dbReference type="ChEBI" id="CHEBI:59789"/>
    </ligand>
</feature>
<feature type="binding site" evidence="1">
    <location>
        <position position="106"/>
    </location>
    <ligand>
        <name>S-adenosyl-L-methionine</name>
        <dbReference type="ChEBI" id="CHEBI:59789"/>
    </ligand>
</feature>
<dbReference type="EC" id="2.1.1.199" evidence="1"/>
<dbReference type="EMBL" id="CP001022">
    <property type="protein sequence ID" value="ACB61419.1"/>
    <property type="molecule type" value="Genomic_DNA"/>
</dbReference>
<dbReference type="RefSeq" id="WP_012370837.1">
    <property type="nucleotide sequence ID" value="NC_010556.1"/>
</dbReference>
<dbReference type="SMR" id="B1YIU3"/>
<dbReference type="STRING" id="262543.Exig_1967"/>
<dbReference type="KEGG" id="esi:Exig_1967"/>
<dbReference type="eggNOG" id="COG0275">
    <property type="taxonomic scope" value="Bacteria"/>
</dbReference>
<dbReference type="HOGENOM" id="CLU_038422_2_0_9"/>
<dbReference type="OrthoDB" id="9806637at2"/>
<dbReference type="Proteomes" id="UP000001681">
    <property type="component" value="Chromosome"/>
</dbReference>
<dbReference type="GO" id="GO:0005737">
    <property type="term" value="C:cytoplasm"/>
    <property type="evidence" value="ECO:0007669"/>
    <property type="project" value="UniProtKB-SubCell"/>
</dbReference>
<dbReference type="GO" id="GO:0071424">
    <property type="term" value="F:rRNA (cytosine-N4-)-methyltransferase activity"/>
    <property type="evidence" value="ECO:0007669"/>
    <property type="project" value="UniProtKB-UniRule"/>
</dbReference>
<dbReference type="GO" id="GO:0070475">
    <property type="term" value="P:rRNA base methylation"/>
    <property type="evidence" value="ECO:0007669"/>
    <property type="project" value="UniProtKB-UniRule"/>
</dbReference>
<dbReference type="FunFam" id="1.10.150.170:FF:000001">
    <property type="entry name" value="Ribosomal RNA small subunit methyltransferase H"/>
    <property type="match status" value="1"/>
</dbReference>
<dbReference type="Gene3D" id="1.10.150.170">
    <property type="entry name" value="Putative methyltransferase TM0872, insert domain"/>
    <property type="match status" value="1"/>
</dbReference>
<dbReference type="Gene3D" id="3.40.50.150">
    <property type="entry name" value="Vaccinia Virus protein VP39"/>
    <property type="match status" value="1"/>
</dbReference>
<dbReference type="HAMAP" id="MF_01007">
    <property type="entry name" value="16SrRNA_methyltr_H"/>
    <property type="match status" value="1"/>
</dbReference>
<dbReference type="InterPro" id="IPR002903">
    <property type="entry name" value="RsmH"/>
</dbReference>
<dbReference type="InterPro" id="IPR023397">
    <property type="entry name" value="SAM-dep_MeTrfase_MraW_recog"/>
</dbReference>
<dbReference type="InterPro" id="IPR029063">
    <property type="entry name" value="SAM-dependent_MTases_sf"/>
</dbReference>
<dbReference type="NCBIfam" id="TIGR00006">
    <property type="entry name" value="16S rRNA (cytosine(1402)-N(4))-methyltransferase RsmH"/>
    <property type="match status" value="1"/>
</dbReference>
<dbReference type="PANTHER" id="PTHR11265:SF0">
    <property type="entry name" value="12S RRNA N4-METHYLCYTIDINE METHYLTRANSFERASE"/>
    <property type="match status" value="1"/>
</dbReference>
<dbReference type="PANTHER" id="PTHR11265">
    <property type="entry name" value="S-ADENOSYL-METHYLTRANSFERASE MRAW"/>
    <property type="match status" value="1"/>
</dbReference>
<dbReference type="Pfam" id="PF01795">
    <property type="entry name" value="Methyltransf_5"/>
    <property type="match status" value="1"/>
</dbReference>
<dbReference type="PIRSF" id="PIRSF004486">
    <property type="entry name" value="MraW"/>
    <property type="match status" value="1"/>
</dbReference>
<dbReference type="SUPFAM" id="SSF81799">
    <property type="entry name" value="Putative methyltransferase TM0872, insert domain"/>
    <property type="match status" value="1"/>
</dbReference>
<dbReference type="SUPFAM" id="SSF53335">
    <property type="entry name" value="S-adenosyl-L-methionine-dependent methyltransferases"/>
    <property type="match status" value="1"/>
</dbReference>
<organism>
    <name type="scientific">Exiguobacterium sibiricum (strain DSM 17290 / CCUG 55495 / CIP 109462 / JCM 13490 / 255-15)</name>
    <dbReference type="NCBI Taxonomy" id="262543"/>
    <lineage>
        <taxon>Bacteria</taxon>
        <taxon>Bacillati</taxon>
        <taxon>Bacillota</taxon>
        <taxon>Bacilli</taxon>
        <taxon>Bacillales</taxon>
        <taxon>Bacillales Family XII. Incertae Sedis</taxon>
        <taxon>Exiguobacterium</taxon>
    </lineage>
</organism>
<evidence type="ECO:0000255" key="1">
    <source>
        <dbReference type="HAMAP-Rule" id="MF_01007"/>
    </source>
</evidence>
<sequence>MFEHETVLKWESIKGLNIKPDGIYVDCTLGGAGHSEEIVKQLTTGHLYAFDQDDVALAHAAERLAAYEGRFTLIKSNFVHLKEELEARSVTKVDGILFDLGVSSPQLDEGERGFSYNFDARLDMRMDQTSPLSAYEVVNEWPYNDLVRILFTYGEEKFSKQIARKIEKAREIAPIETTFELVELIKDAIPAPARRKGGHPAKRTFQAIRIAVNDELNVFDRAVYQAIDLLAVGGRLCVITFHSLEDRMCKQAFKEKSSLPELPQGLPMIPKEFEPELRLVTRKPITAGDDELDDNRRSRSAKLRIVEKMKES</sequence>
<proteinExistence type="inferred from homology"/>
<keyword id="KW-0963">Cytoplasm</keyword>
<keyword id="KW-0489">Methyltransferase</keyword>
<keyword id="KW-1185">Reference proteome</keyword>
<keyword id="KW-0698">rRNA processing</keyword>
<keyword id="KW-0949">S-adenosyl-L-methionine</keyword>
<keyword id="KW-0808">Transferase</keyword>
<reference key="1">
    <citation type="submission" date="2008-04" db="EMBL/GenBank/DDBJ databases">
        <title>Complete sequence of chromosome of Exiguobacterium sibiricum 255-15.</title>
        <authorList>
            <consortium name="US DOE Joint Genome Institute"/>
            <person name="Copeland A."/>
            <person name="Lucas S."/>
            <person name="Lapidus A."/>
            <person name="Glavina del Rio T."/>
            <person name="Dalin E."/>
            <person name="Tice H."/>
            <person name="Bruce D."/>
            <person name="Goodwin L."/>
            <person name="Pitluck S."/>
            <person name="Kiss H."/>
            <person name="Chertkov O."/>
            <person name="Monk C."/>
            <person name="Brettin T."/>
            <person name="Detter J.C."/>
            <person name="Han C."/>
            <person name="Kuske C.R."/>
            <person name="Schmutz J."/>
            <person name="Larimer F."/>
            <person name="Land M."/>
            <person name="Hauser L."/>
            <person name="Kyrpides N."/>
            <person name="Mikhailova N."/>
            <person name="Vishnivetskaya T."/>
            <person name="Rodrigues D.F."/>
            <person name="Gilichinsky D."/>
            <person name="Tiedje J."/>
            <person name="Richardson P."/>
        </authorList>
    </citation>
    <scope>NUCLEOTIDE SEQUENCE [LARGE SCALE GENOMIC DNA]</scope>
    <source>
        <strain>DSM 17290 / CCUG 55495 / CIP 109462 / JCM 13490 / 255-15</strain>
    </source>
</reference>
<accession>B1YIU3</accession>
<name>RSMH_EXIS2</name>
<comment type="function">
    <text evidence="1">Specifically methylates the N4 position of cytidine in position 1402 (C1402) of 16S rRNA.</text>
</comment>
<comment type="catalytic activity">
    <reaction evidence="1">
        <text>cytidine(1402) in 16S rRNA + S-adenosyl-L-methionine = N(4)-methylcytidine(1402) in 16S rRNA + S-adenosyl-L-homocysteine + H(+)</text>
        <dbReference type="Rhea" id="RHEA:42928"/>
        <dbReference type="Rhea" id="RHEA-COMP:10286"/>
        <dbReference type="Rhea" id="RHEA-COMP:10287"/>
        <dbReference type="ChEBI" id="CHEBI:15378"/>
        <dbReference type="ChEBI" id="CHEBI:57856"/>
        <dbReference type="ChEBI" id="CHEBI:59789"/>
        <dbReference type="ChEBI" id="CHEBI:74506"/>
        <dbReference type="ChEBI" id="CHEBI:82748"/>
        <dbReference type="EC" id="2.1.1.199"/>
    </reaction>
</comment>
<comment type="subcellular location">
    <subcellularLocation>
        <location evidence="1">Cytoplasm</location>
    </subcellularLocation>
</comment>
<comment type="similarity">
    <text evidence="1">Belongs to the methyltransferase superfamily. RsmH family.</text>
</comment>
<protein>
    <recommendedName>
        <fullName evidence="1">Ribosomal RNA small subunit methyltransferase H</fullName>
        <ecNumber evidence="1">2.1.1.199</ecNumber>
    </recommendedName>
    <alternativeName>
        <fullName evidence="1">16S rRNA m(4)C1402 methyltransferase</fullName>
    </alternativeName>
    <alternativeName>
        <fullName evidence="1">rRNA (cytosine-N(4)-)-methyltransferase RsmH</fullName>
    </alternativeName>
</protein>
<gene>
    <name evidence="1" type="primary">rsmH</name>
    <name type="synonym">mraW</name>
    <name type="ordered locus">Exig_1967</name>
</gene>